<sequence length="570" mass="64016">MSEKHPGPLVVEGKLSDAERMKRESNFLRGTIAEDLNDGLTGGFHGDNFLLIRFHGMYQQDDRDIRAERAAQKLEPRHAMLLRCRLPGGVITTTQWKAIDKFAADNTIYGSIRLTNRQTFQFHGILKKNVKPVHQMLHSVGLDALATANDMNRNVLCTSNPYESQLHAEAYEWAKKISEHLLPRTRAYAEIWLDQEKVATTDEEPILGQTYLPRKFKTTVVIPPQNDIDLHANDMNLVAIAENGKLVGFNLLVGGGLSIEHGNKKTYARTASEFGYLPLEHTLAVAEAVVTTQRDWGNRTDRKNAKTKYTLERVGVDTFKEEVERRAGIKFEPIRPYEFTGRGDRIGWVKGIDNNWHLTLFIENGRILDYSGRPLKTGLLEIAKIHQGEFRITANQNLIIASVPESQKAKIETLARDHGLMNAVKPQRENSMACVSFPTCPLAMAEAERFLPSFTDKVEAILEKHGIPDEHIVMRVTGCPNGCGRAMLAEIGLVGKAPGRYNLHLGGNRIGTRIPRMYKENITEPDILASLGELIGRWAKEREAGEGFGDFTVRAGIIRPVLDPARDFWE</sequence>
<name>CYSI_SALPA</name>
<evidence type="ECO:0000250" key="1"/>
<evidence type="ECO:0000255" key="2">
    <source>
        <dbReference type="HAMAP-Rule" id="MF_01540"/>
    </source>
</evidence>
<feature type="initiator methionine" description="Removed" evidence="1">
    <location>
        <position position="1"/>
    </location>
</feature>
<feature type="chain" id="PRO_0000199906" description="Sulfite reductase [NADPH] hemoprotein beta-component">
    <location>
        <begin position="2"/>
        <end position="570"/>
    </location>
</feature>
<feature type="binding site" evidence="2">
    <location>
        <position position="434"/>
    </location>
    <ligand>
        <name>[4Fe-4S] cluster</name>
        <dbReference type="ChEBI" id="CHEBI:49883"/>
    </ligand>
</feature>
<feature type="binding site" evidence="2">
    <location>
        <position position="440"/>
    </location>
    <ligand>
        <name>[4Fe-4S] cluster</name>
        <dbReference type="ChEBI" id="CHEBI:49883"/>
    </ligand>
</feature>
<feature type="binding site" evidence="2">
    <location>
        <position position="479"/>
    </location>
    <ligand>
        <name>[4Fe-4S] cluster</name>
        <dbReference type="ChEBI" id="CHEBI:49883"/>
    </ligand>
</feature>
<feature type="binding site" evidence="2">
    <location>
        <position position="483"/>
    </location>
    <ligand>
        <name>[4Fe-4S] cluster</name>
        <dbReference type="ChEBI" id="CHEBI:49883"/>
    </ligand>
</feature>
<feature type="binding site" description="axial binding residue" evidence="2">
    <location>
        <position position="483"/>
    </location>
    <ligand>
        <name>siroheme</name>
        <dbReference type="ChEBI" id="CHEBI:60052"/>
    </ligand>
    <ligandPart>
        <name>Fe</name>
        <dbReference type="ChEBI" id="CHEBI:18248"/>
    </ligandPart>
</feature>
<proteinExistence type="inferred from homology"/>
<reference key="1">
    <citation type="journal article" date="2004" name="Nat. Genet.">
        <title>Comparison of genome degradation in Paratyphi A and Typhi, human-restricted serovars of Salmonella enterica that cause typhoid.</title>
        <authorList>
            <person name="McClelland M."/>
            <person name="Sanderson K.E."/>
            <person name="Clifton S.W."/>
            <person name="Latreille P."/>
            <person name="Porwollik S."/>
            <person name="Sabo A."/>
            <person name="Meyer R."/>
            <person name="Bieri T."/>
            <person name="Ozersky P."/>
            <person name="McLellan M."/>
            <person name="Harkins C.R."/>
            <person name="Wang C."/>
            <person name="Nguyen C."/>
            <person name="Berghoff A."/>
            <person name="Elliott G."/>
            <person name="Kohlberg S."/>
            <person name="Strong C."/>
            <person name="Du F."/>
            <person name="Carter J."/>
            <person name="Kremizki C."/>
            <person name="Layman D."/>
            <person name="Leonard S."/>
            <person name="Sun H."/>
            <person name="Fulton L."/>
            <person name="Nash W."/>
            <person name="Miner T."/>
            <person name="Minx P."/>
            <person name="Delehaunty K."/>
            <person name="Fronick C."/>
            <person name="Magrini V."/>
            <person name="Nhan M."/>
            <person name="Warren W."/>
            <person name="Florea L."/>
            <person name="Spieth J."/>
            <person name="Wilson R.K."/>
        </authorList>
    </citation>
    <scope>NUCLEOTIDE SEQUENCE [LARGE SCALE GENOMIC DNA]</scope>
    <source>
        <strain>ATCC 9150 / SARB42</strain>
    </source>
</reference>
<gene>
    <name evidence="2" type="primary">cysI</name>
    <name type="ordered locus">SPA2803</name>
</gene>
<organism>
    <name type="scientific">Salmonella paratyphi A (strain ATCC 9150 / SARB42)</name>
    <dbReference type="NCBI Taxonomy" id="295319"/>
    <lineage>
        <taxon>Bacteria</taxon>
        <taxon>Pseudomonadati</taxon>
        <taxon>Pseudomonadota</taxon>
        <taxon>Gammaproteobacteria</taxon>
        <taxon>Enterobacterales</taxon>
        <taxon>Enterobacteriaceae</taxon>
        <taxon>Salmonella</taxon>
    </lineage>
</organism>
<keyword id="KW-0004">4Fe-4S</keyword>
<keyword id="KW-0028">Amino-acid biosynthesis</keyword>
<keyword id="KW-0198">Cysteine biosynthesis</keyword>
<keyword id="KW-0349">Heme</keyword>
<keyword id="KW-0408">Iron</keyword>
<keyword id="KW-0411">Iron-sulfur</keyword>
<keyword id="KW-0479">Metal-binding</keyword>
<keyword id="KW-0521">NADP</keyword>
<keyword id="KW-0560">Oxidoreductase</keyword>
<accession>Q5PEH8</accession>
<protein>
    <recommendedName>
        <fullName evidence="2">Sulfite reductase [NADPH] hemoprotein beta-component</fullName>
        <shortName evidence="2">SiR-HP</shortName>
        <shortName evidence="2">SiRHP</shortName>
        <ecNumber evidence="2">1.8.1.2</ecNumber>
    </recommendedName>
</protein>
<comment type="function">
    <text evidence="2">Component of the sulfite reductase complex that catalyzes the 6-electron reduction of sulfite to sulfide. This is one of several activities required for the biosynthesis of L-cysteine from sulfate.</text>
</comment>
<comment type="catalytic activity">
    <reaction evidence="2">
        <text>hydrogen sulfide + 3 NADP(+) + 3 H2O = sulfite + 3 NADPH + 4 H(+)</text>
        <dbReference type="Rhea" id="RHEA:13801"/>
        <dbReference type="ChEBI" id="CHEBI:15377"/>
        <dbReference type="ChEBI" id="CHEBI:15378"/>
        <dbReference type="ChEBI" id="CHEBI:17359"/>
        <dbReference type="ChEBI" id="CHEBI:29919"/>
        <dbReference type="ChEBI" id="CHEBI:57783"/>
        <dbReference type="ChEBI" id="CHEBI:58349"/>
        <dbReference type="EC" id="1.8.1.2"/>
    </reaction>
</comment>
<comment type="cofactor">
    <cofactor evidence="2">
        <name>siroheme</name>
        <dbReference type="ChEBI" id="CHEBI:60052"/>
    </cofactor>
    <text evidence="2">Binds 1 siroheme per subunit.</text>
</comment>
<comment type="cofactor">
    <cofactor evidence="2">
        <name>[4Fe-4S] cluster</name>
        <dbReference type="ChEBI" id="CHEBI:49883"/>
    </cofactor>
    <text evidence="2">Binds 1 [4Fe-4S] cluster per subunit.</text>
</comment>
<comment type="pathway">
    <text evidence="2">Sulfur metabolism; hydrogen sulfide biosynthesis; hydrogen sulfide from sulfite (NADPH route): step 1/1.</text>
</comment>
<comment type="subunit">
    <text evidence="2">Alpha(8)-beta(8). The alpha component is a flavoprotein, the beta component is a hemoprotein.</text>
</comment>
<comment type="similarity">
    <text evidence="2">Belongs to the nitrite and sulfite reductase 4Fe-4S domain family.</text>
</comment>
<dbReference type="EC" id="1.8.1.2" evidence="2"/>
<dbReference type="EMBL" id="CP000026">
    <property type="protein sequence ID" value="AAV78655.1"/>
    <property type="molecule type" value="Genomic_DNA"/>
</dbReference>
<dbReference type="RefSeq" id="WP_001290675.1">
    <property type="nucleotide sequence ID" value="NC_006511.1"/>
</dbReference>
<dbReference type="SMR" id="Q5PEH8"/>
<dbReference type="KEGG" id="spt:SPA2803"/>
<dbReference type="HOGENOM" id="CLU_001975_3_2_6"/>
<dbReference type="UniPathway" id="UPA00140">
    <property type="reaction ID" value="UER00207"/>
</dbReference>
<dbReference type="Proteomes" id="UP000008185">
    <property type="component" value="Chromosome"/>
</dbReference>
<dbReference type="GO" id="GO:0009337">
    <property type="term" value="C:sulfite reductase complex (NADPH)"/>
    <property type="evidence" value="ECO:0007669"/>
    <property type="project" value="InterPro"/>
</dbReference>
<dbReference type="GO" id="GO:0051539">
    <property type="term" value="F:4 iron, 4 sulfur cluster binding"/>
    <property type="evidence" value="ECO:0007669"/>
    <property type="project" value="UniProtKB-KW"/>
</dbReference>
<dbReference type="GO" id="GO:0020037">
    <property type="term" value="F:heme binding"/>
    <property type="evidence" value="ECO:0007669"/>
    <property type="project" value="InterPro"/>
</dbReference>
<dbReference type="GO" id="GO:0046872">
    <property type="term" value="F:metal ion binding"/>
    <property type="evidence" value="ECO:0007669"/>
    <property type="project" value="UniProtKB-KW"/>
</dbReference>
<dbReference type="GO" id="GO:0050661">
    <property type="term" value="F:NADP binding"/>
    <property type="evidence" value="ECO:0007669"/>
    <property type="project" value="InterPro"/>
</dbReference>
<dbReference type="GO" id="GO:0050311">
    <property type="term" value="F:sulfite reductase (ferredoxin) activity"/>
    <property type="evidence" value="ECO:0007669"/>
    <property type="project" value="TreeGrafter"/>
</dbReference>
<dbReference type="GO" id="GO:0004783">
    <property type="term" value="F:sulfite reductase (NADPH) activity"/>
    <property type="evidence" value="ECO:0007669"/>
    <property type="project" value="UniProtKB-UniRule"/>
</dbReference>
<dbReference type="GO" id="GO:0019344">
    <property type="term" value="P:cysteine biosynthetic process"/>
    <property type="evidence" value="ECO:0007669"/>
    <property type="project" value="UniProtKB-KW"/>
</dbReference>
<dbReference type="GO" id="GO:0070814">
    <property type="term" value="P:hydrogen sulfide biosynthetic process"/>
    <property type="evidence" value="ECO:0007669"/>
    <property type="project" value="UniProtKB-UniRule"/>
</dbReference>
<dbReference type="GO" id="GO:0000103">
    <property type="term" value="P:sulfate assimilation"/>
    <property type="evidence" value="ECO:0007669"/>
    <property type="project" value="UniProtKB-UniRule"/>
</dbReference>
<dbReference type="FunFam" id="3.30.413.10:FF:000003">
    <property type="entry name" value="Sulfite reductase [NADPH] hemoprotein beta-component"/>
    <property type="match status" value="1"/>
</dbReference>
<dbReference type="FunFam" id="3.30.413.10:FF:000004">
    <property type="entry name" value="Sulfite reductase [NADPH] hemoprotein beta-component"/>
    <property type="match status" value="1"/>
</dbReference>
<dbReference type="Gene3D" id="3.30.413.10">
    <property type="entry name" value="Sulfite Reductase Hemoprotein, domain 1"/>
    <property type="match status" value="2"/>
</dbReference>
<dbReference type="HAMAP" id="MF_01540">
    <property type="entry name" value="CysI"/>
    <property type="match status" value="1"/>
</dbReference>
<dbReference type="InterPro" id="IPR011786">
    <property type="entry name" value="CysI"/>
</dbReference>
<dbReference type="InterPro" id="IPR005117">
    <property type="entry name" value="NiRdtase/SiRdtase_haem-b_fer"/>
</dbReference>
<dbReference type="InterPro" id="IPR036136">
    <property type="entry name" value="Nit/Sulf_reduc_fer-like_dom_sf"/>
</dbReference>
<dbReference type="InterPro" id="IPR006067">
    <property type="entry name" value="NO2/SO3_Rdtase_4Fe4S_dom"/>
</dbReference>
<dbReference type="InterPro" id="IPR045169">
    <property type="entry name" value="NO2/SO3_Rdtase_4Fe4S_prot"/>
</dbReference>
<dbReference type="InterPro" id="IPR045854">
    <property type="entry name" value="NO2/SO3_Rdtase_4Fe4S_sf"/>
</dbReference>
<dbReference type="InterPro" id="IPR006066">
    <property type="entry name" value="NO2/SO3_Rdtase_FeS/sirohaem_BS"/>
</dbReference>
<dbReference type="NCBIfam" id="TIGR02041">
    <property type="entry name" value="CysI"/>
    <property type="match status" value="1"/>
</dbReference>
<dbReference type="NCBIfam" id="NF010029">
    <property type="entry name" value="PRK13504.1"/>
    <property type="match status" value="1"/>
</dbReference>
<dbReference type="PANTHER" id="PTHR11493:SF47">
    <property type="entry name" value="SULFITE REDUCTASE [NADPH] SUBUNIT BETA"/>
    <property type="match status" value="1"/>
</dbReference>
<dbReference type="PANTHER" id="PTHR11493">
    <property type="entry name" value="SULFITE REDUCTASE [NADPH] SUBUNIT BETA-RELATED"/>
    <property type="match status" value="1"/>
</dbReference>
<dbReference type="Pfam" id="PF01077">
    <property type="entry name" value="NIR_SIR"/>
    <property type="match status" value="1"/>
</dbReference>
<dbReference type="Pfam" id="PF03460">
    <property type="entry name" value="NIR_SIR_ferr"/>
    <property type="match status" value="2"/>
</dbReference>
<dbReference type="PRINTS" id="PR00397">
    <property type="entry name" value="SIROHAEM"/>
</dbReference>
<dbReference type="SUPFAM" id="SSF56014">
    <property type="entry name" value="Nitrite and sulphite reductase 4Fe-4S domain-like"/>
    <property type="match status" value="2"/>
</dbReference>
<dbReference type="SUPFAM" id="SSF55124">
    <property type="entry name" value="Nitrite/Sulfite reductase N-terminal domain-like"/>
    <property type="match status" value="2"/>
</dbReference>
<dbReference type="PROSITE" id="PS00365">
    <property type="entry name" value="NIR_SIR"/>
    <property type="match status" value="1"/>
</dbReference>